<comment type="function">
    <text evidence="1">Substrate-recognition component of the SCF (SKP1-CUL1-F-box protein)-type E3 ubiquitin ligase complex.</text>
</comment>
<comment type="subunit">
    <text evidence="1">Directly interacts with SKP1 and CUL1.</text>
</comment>
<comment type="interaction">
    <interactant intactId="EBI-311435">
        <id>O94952</id>
    </interactant>
    <interactant intactId="EBI-1049975">
        <id>Q9Y6B2</id>
        <label>EID1</label>
    </interactant>
    <organismsDiffer>false</organismsDiffer>
    <experiments>7</experiments>
</comment>
<comment type="interaction">
    <interactant intactId="EBI-311435">
        <id>O94952</id>
    </interactant>
    <interactant intactId="EBI-307486">
        <id>P63208</id>
        <label>SKP1</label>
    </interactant>
    <organismsDiffer>false</organismsDiffer>
    <experiments>10</experiments>
</comment>
<comment type="alternative products">
    <event type="alternative splicing"/>
    <isoform>
        <id>O94952-2</id>
        <name>1</name>
        <sequence type="displayed"/>
    </isoform>
    <isoform>
        <id>O94952-1</id>
        <name>2</name>
        <sequence type="described" ref="VSP_035975"/>
    </isoform>
</comment>
<comment type="miscellaneous">
    <molecule>Isoform 1</molecule>
    <text>May be due to a competing acceptor splice site.</text>
</comment>
<comment type="sequence caution" evidence="6">
    <conflict type="erroneous termination">
        <sequence resource="EMBL-CDS" id="CAB66833"/>
    </conflict>
    <text>Truncated C-terminus.</text>
</comment>
<protein>
    <recommendedName>
        <fullName>F-box only protein 21</fullName>
    </recommendedName>
</protein>
<name>FBX21_HUMAN</name>
<dbReference type="EMBL" id="AF174601">
    <property type="protein sequence ID" value="AAF04522.1"/>
    <property type="molecule type" value="mRNA"/>
</dbReference>
<dbReference type="EMBL" id="AB020682">
    <property type="protein sequence ID" value="BAA74898.1"/>
    <property type="molecule type" value="mRNA"/>
</dbReference>
<dbReference type="EMBL" id="AK001699">
    <property type="protein sequence ID" value="BAG50962.1"/>
    <property type="molecule type" value="mRNA"/>
</dbReference>
<dbReference type="EMBL" id="AC026364">
    <property type="status" value="NOT_ANNOTATED_CDS"/>
    <property type="molecule type" value="Genomic_DNA"/>
</dbReference>
<dbReference type="EMBL" id="AC026368">
    <property type="status" value="NOT_ANNOTATED_CDS"/>
    <property type="molecule type" value="Genomic_DNA"/>
</dbReference>
<dbReference type="EMBL" id="CH471054">
    <property type="protein sequence ID" value="EAW98105.1"/>
    <property type="molecule type" value="Genomic_DNA"/>
</dbReference>
<dbReference type="EMBL" id="BC091496">
    <property type="protein sequence ID" value="AAH91496.1"/>
    <property type="molecule type" value="mRNA"/>
</dbReference>
<dbReference type="EMBL" id="AL136899">
    <property type="protein sequence ID" value="CAB66833.2"/>
    <property type="status" value="ALT_SEQ"/>
    <property type="molecule type" value="mRNA"/>
</dbReference>
<dbReference type="CCDS" id="CCDS44989.1">
    <molecule id="O94952-1"/>
</dbReference>
<dbReference type="CCDS" id="CCDS9184.1">
    <molecule id="O94952-2"/>
</dbReference>
<dbReference type="RefSeq" id="NP_055817.1">
    <molecule id="O94952-1"/>
    <property type="nucleotide sequence ID" value="NM_015002.3"/>
</dbReference>
<dbReference type="RefSeq" id="NP_296373.1">
    <molecule id="O94952-2"/>
    <property type="nucleotide sequence ID" value="NM_033624.3"/>
</dbReference>
<dbReference type="BioGRID" id="116656">
    <property type="interactions" value="70"/>
</dbReference>
<dbReference type="ComplexPortal" id="CPX-7930">
    <property type="entry name" value="SCF E3 ubiquitin ligase complex, FBXO21 variant"/>
</dbReference>
<dbReference type="FunCoup" id="O94952">
    <property type="interactions" value="354"/>
</dbReference>
<dbReference type="IntAct" id="O94952">
    <property type="interactions" value="35"/>
</dbReference>
<dbReference type="MINT" id="O94952"/>
<dbReference type="STRING" id="9606.ENSP00000328187"/>
<dbReference type="GlyGen" id="O94952">
    <property type="glycosylation" value="1 site, 1 O-linked glycan (1 site)"/>
</dbReference>
<dbReference type="iPTMnet" id="O94952"/>
<dbReference type="PhosphoSitePlus" id="O94952"/>
<dbReference type="BioMuta" id="FBXO21"/>
<dbReference type="jPOST" id="O94952"/>
<dbReference type="MassIVE" id="O94952"/>
<dbReference type="PaxDb" id="9606-ENSP00000328187"/>
<dbReference type="PeptideAtlas" id="O94952"/>
<dbReference type="ProteomicsDB" id="50572">
    <molecule id="O94952-2"/>
</dbReference>
<dbReference type="ProteomicsDB" id="50573">
    <molecule id="O94952-1"/>
</dbReference>
<dbReference type="Pumba" id="O94952"/>
<dbReference type="Antibodypedia" id="31332">
    <property type="antibodies" value="311 antibodies from 23 providers"/>
</dbReference>
<dbReference type="DNASU" id="23014"/>
<dbReference type="Ensembl" id="ENST00000330622.9">
    <molecule id="O94952-2"/>
    <property type="protein sequence ID" value="ENSP00000328187.5"/>
    <property type="gene ID" value="ENSG00000135108.16"/>
</dbReference>
<dbReference type="Ensembl" id="ENST00000622495.5">
    <molecule id="O94952-1"/>
    <property type="protein sequence ID" value="ENSP00000483508.1"/>
    <property type="gene ID" value="ENSG00000135108.16"/>
</dbReference>
<dbReference type="GeneID" id="23014"/>
<dbReference type="KEGG" id="hsa:23014"/>
<dbReference type="MANE-Select" id="ENST00000622495.5">
    <molecule id="O94952-1"/>
    <property type="protein sequence ID" value="ENSP00000483508.1"/>
    <property type="RefSeq nucleotide sequence ID" value="NM_015002.3"/>
    <property type="RefSeq protein sequence ID" value="NP_055817.1"/>
</dbReference>
<dbReference type="UCSC" id="uc001twj.4">
    <molecule id="O94952-2"/>
    <property type="organism name" value="human"/>
</dbReference>
<dbReference type="AGR" id="HGNC:13592"/>
<dbReference type="CTD" id="23014"/>
<dbReference type="DisGeNET" id="23014"/>
<dbReference type="GeneCards" id="FBXO21"/>
<dbReference type="HGNC" id="HGNC:13592">
    <property type="gene designation" value="FBXO21"/>
</dbReference>
<dbReference type="HPA" id="ENSG00000135108">
    <property type="expression patterns" value="Tissue enhanced (fallopian)"/>
</dbReference>
<dbReference type="MIM" id="609095">
    <property type="type" value="gene"/>
</dbReference>
<dbReference type="neXtProt" id="NX_O94952"/>
<dbReference type="OpenTargets" id="ENSG00000135108"/>
<dbReference type="PharmGKB" id="PA28034"/>
<dbReference type="VEuPathDB" id="HostDB:ENSG00000135108"/>
<dbReference type="eggNOG" id="ENOG502QS7Z">
    <property type="taxonomic scope" value="Eukaryota"/>
</dbReference>
<dbReference type="GeneTree" id="ENSGT00390000005653"/>
<dbReference type="InParanoid" id="O94952"/>
<dbReference type="OMA" id="KQPFYNV"/>
<dbReference type="OrthoDB" id="28868at2759"/>
<dbReference type="PAN-GO" id="O94952">
    <property type="GO annotations" value="0 GO annotations based on evolutionary models"/>
</dbReference>
<dbReference type="PhylomeDB" id="O94952"/>
<dbReference type="TreeFam" id="TF313177"/>
<dbReference type="PathwayCommons" id="O94952"/>
<dbReference type="Reactome" id="R-HSA-8951664">
    <property type="pathway name" value="Neddylation"/>
</dbReference>
<dbReference type="Reactome" id="R-HSA-983168">
    <property type="pathway name" value="Antigen processing: Ubiquitination &amp; Proteasome degradation"/>
</dbReference>
<dbReference type="SignaLink" id="O94952"/>
<dbReference type="SIGNOR" id="O94952"/>
<dbReference type="BioGRID-ORCS" id="23014">
    <property type="hits" value="8 hits in 1194 CRISPR screens"/>
</dbReference>
<dbReference type="ChiTaRS" id="FBXO21">
    <property type="organism name" value="human"/>
</dbReference>
<dbReference type="GenomeRNAi" id="23014"/>
<dbReference type="Pharos" id="O94952">
    <property type="development level" value="Tbio"/>
</dbReference>
<dbReference type="PRO" id="PR:O94952"/>
<dbReference type="Proteomes" id="UP000005640">
    <property type="component" value="Chromosome 12"/>
</dbReference>
<dbReference type="RNAct" id="O94952">
    <property type="molecule type" value="protein"/>
</dbReference>
<dbReference type="Bgee" id="ENSG00000135108">
    <property type="expression patterns" value="Expressed in corpus epididymis and 207 other cell types or tissues"/>
</dbReference>
<dbReference type="ExpressionAtlas" id="O94952">
    <property type="expression patterns" value="baseline and differential"/>
</dbReference>
<dbReference type="GO" id="GO:0005829">
    <property type="term" value="C:cytosol"/>
    <property type="evidence" value="ECO:0000304"/>
    <property type="project" value="Reactome"/>
</dbReference>
<dbReference type="GO" id="GO:0000151">
    <property type="term" value="C:ubiquitin ligase complex"/>
    <property type="evidence" value="ECO:0000303"/>
    <property type="project" value="UniProtKB"/>
</dbReference>
<dbReference type="GO" id="GO:0003677">
    <property type="term" value="F:DNA binding"/>
    <property type="evidence" value="ECO:0007669"/>
    <property type="project" value="InterPro"/>
</dbReference>
<dbReference type="GO" id="GO:0004842">
    <property type="term" value="F:ubiquitin-protein transferase activity"/>
    <property type="evidence" value="ECO:0000303"/>
    <property type="project" value="UniProtKB"/>
</dbReference>
<dbReference type="GO" id="GO:0006915">
    <property type="term" value="P:apoptotic process"/>
    <property type="evidence" value="ECO:0007669"/>
    <property type="project" value="Ensembl"/>
</dbReference>
<dbReference type="GO" id="GO:0019221">
    <property type="term" value="P:cytokine-mediated signaling pathway"/>
    <property type="evidence" value="ECO:0007669"/>
    <property type="project" value="Ensembl"/>
</dbReference>
<dbReference type="GO" id="GO:0070371">
    <property type="term" value="P:ERK1 and ERK2 cascade"/>
    <property type="evidence" value="ECO:0007669"/>
    <property type="project" value="Ensembl"/>
</dbReference>
<dbReference type="GO" id="GO:0060218">
    <property type="term" value="P:hematopoietic stem cell differentiation"/>
    <property type="evidence" value="ECO:0007669"/>
    <property type="project" value="Ensembl"/>
</dbReference>
<dbReference type="GO" id="GO:0061484">
    <property type="term" value="P:hematopoietic stem cell homeostasis"/>
    <property type="evidence" value="ECO:0007669"/>
    <property type="project" value="Ensembl"/>
</dbReference>
<dbReference type="GO" id="GO:0006511">
    <property type="term" value="P:ubiquitin-dependent protein catabolic process"/>
    <property type="evidence" value="ECO:0000303"/>
    <property type="project" value="UniProtKB"/>
</dbReference>
<dbReference type="CDD" id="cd22096">
    <property type="entry name" value="F-box_FBXO21"/>
    <property type="match status" value="1"/>
</dbReference>
<dbReference type="Gene3D" id="1.20.1280.50">
    <property type="match status" value="1"/>
</dbReference>
<dbReference type="Gene3D" id="2.30.30.390">
    <property type="entry name" value="Hemimethylated DNA-binding domain"/>
    <property type="match status" value="1"/>
</dbReference>
<dbReference type="InterPro" id="IPR036047">
    <property type="entry name" value="F-box-like_dom_sf"/>
</dbReference>
<dbReference type="InterPro" id="IPR001810">
    <property type="entry name" value="F-box_dom"/>
</dbReference>
<dbReference type="InterPro" id="IPR011722">
    <property type="entry name" value="Hemimethylated_DNA-bd_dom"/>
</dbReference>
<dbReference type="InterPro" id="IPR036623">
    <property type="entry name" value="Hemimethylated_DNA-bd_sf"/>
</dbReference>
<dbReference type="InterPro" id="IPR032698">
    <property type="entry name" value="SirB1_N"/>
</dbReference>
<dbReference type="NCBIfam" id="TIGR02097">
    <property type="entry name" value="yccV"/>
    <property type="match status" value="1"/>
</dbReference>
<dbReference type="PANTHER" id="PTHR31350:SF21">
    <property type="entry name" value="F-BOX ONLY PROTEIN 21"/>
    <property type="match status" value="1"/>
</dbReference>
<dbReference type="PANTHER" id="PTHR31350">
    <property type="entry name" value="SI:DKEY-261L7.2"/>
    <property type="match status" value="1"/>
</dbReference>
<dbReference type="Pfam" id="PF12937">
    <property type="entry name" value="F-box-like"/>
    <property type="match status" value="1"/>
</dbReference>
<dbReference type="Pfam" id="PF13369">
    <property type="entry name" value="Transglut_core2"/>
    <property type="match status" value="1"/>
</dbReference>
<dbReference type="Pfam" id="PF08755">
    <property type="entry name" value="YccV-like"/>
    <property type="match status" value="1"/>
</dbReference>
<dbReference type="SMART" id="SM00992">
    <property type="entry name" value="YccV-like"/>
    <property type="match status" value="1"/>
</dbReference>
<dbReference type="SUPFAM" id="SSF81383">
    <property type="entry name" value="F-box domain"/>
    <property type="match status" value="1"/>
</dbReference>
<dbReference type="SUPFAM" id="SSF141255">
    <property type="entry name" value="YccV-like"/>
    <property type="match status" value="1"/>
</dbReference>
<keyword id="KW-0025">Alternative splicing</keyword>
<keyword id="KW-1267">Proteomics identification</keyword>
<keyword id="KW-1185">Reference proteome</keyword>
<keyword id="KW-0833">Ubl conjugation pathway</keyword>
<sequence>MAAAAVDSAMEVVPALAEEAAPEVAGLSCLVNLPGEVLEYILCCGSLTAADIGRVSSTCRRLRELCQSSGKVWKEQFRVRWPSLMKHYSPTDYVNWLEEYKVRQKAGLEARKIVASFSKRFFSEHVPCNGFSDIENLEGPEIFFEDELVCILNMEGRKALTWKYYAKKILYYLRQQKILNNLKAFLQQPDDYESYLEGAVYIDQYCNPLSDISLKDIQAQIDSIVELVCKTLRGINSRHPSLAFKAGESSMIMEIELQSQVLDAMNYVLYDQLKFKGNRMDYYNALNLYMHQVLIRRTGIPISMSLLYLTIARQLGVPLEPVNFPSHFLLRWCQGAEGATLDIFDYIYIDAFGKGKQLTVKECEYLIGQHVTAALYGVVNVKKVLQRMVGNLLSLGKREGIDQSYQLLRDSLDLYLAMYPDQVQLLLLQARLYFHLGIWPEKSFCLVLKVLDILQHIQTLDPGQHGAVGYLVQHTLEHIERKKEEVGVEVKLRSDEKHRDVCYSIGLIMKHKRYGYNCVIYGWDPTCMMGHEWIRNMNVHSLPHGHHQPFYNVLVEDGSCRYAAQENLEYNVEPQEISHPDVGRYFSEFTGTHYIPNAELEIRYPEDLEFVYETVQNIYSAKKENIDE</sequence>
<reference key="1">
    <citation type="journal article" date="1999" name="Curr. Biol.">
        <title>Identification of a family of human F-box proteins.</title>
        <authorList>
            <person name="Cenciarelli C."/>
            <person name="Chiaur D.S."/>
            <person name="Guardavaccaro D."/>
            <person name="Parks W."/>
            <person name="Vidal M."/>
            <person name="Pagano M."/>
        </authorList>
    </citation>
    <scope>NUCLEOTIDE SEQUENCE [MRNA] (ISOFORM 2)</scope>
</reference>
<reference key="2">
    <citation type="journal article" date="1998" name="DNA Res.">
        <title>Prediction of the coding sequences of unidentified human genes. XII. The complete sequences of 100 new cDNA clones from brain which code for large proteins in vitro.</title>
        <authorList>
            <person name="Nagase T."/>
            <person name="Ishikawa K."/>
            <person name="Suyama M."/>
            <person name="Kikuno R."/>
            <person name="Hirosawa M."/>
            <person name="Miyajima N."/>
            <person name="Tanaka A."/>
            <person name="Kotani H."/>
            <person name="Nomura N."/>
            <person name="Ohara O."/>
        </authorList>
    </citation>
    <scope>NUCLEOTIDE SEQUENCE [LARGE SCALE MRNA] (ISOFORM 2)</scope>
    <source>
        <tissue>Brain</tissue>
    </source>
</reference>
<reference key="3">
    <citation type="journal article" date="2004" name="Nat. Genet.">
        <title>Complete sequencing and characterization of 21,243 full-length human cDNAs.</title>
        <authorList>
            <person name="Ota T."/>
            <person name="Suzuki Y."/>
            <person name="Nishikawa T."/>
            <person name="Otsuki T."/>
            <person name="Sugiyama T."/>
            <person name="Irie R."/>
            <person name="Wakamatsu A."/>
            <person name="Hayashi K."/>
            <person name="Sato H."/>
            <person name="Nagai K."/>
            <person name="Kimura K."/>
            <person name="Makita H."/>
            <person name="Sekine M."/>
            <person name="Obayashi M."/>
            <person name="Nishi T."/>
            <person name="Shibahara T."/>
            <person name="Tanaka T."/>
            <person name="Ishii S."/>
            <person name="Yamamoto J."/>
            <person name="Saito K."/>
            <person name="Kawai Y."/>
            <person name="Isono Y."/>
            <person name="Nakamura Y."/>
            <person name="Nagahari K."/>
            <person name="Murakami K."/>
            <person name="Yasuda T."/>
            <person name="Iwayanagi T."/>
            <person name="Wagatsuma M."/>
            <person name="Shiratori A."/>
            <person name="Sudo H."/>
            <person name="Hosoiri T."/>
            <person name="Kaku Y."/>
            <person name="Kodaira H."/>
            <person name="Kondo H."/>
            <person name="Sugawara M."/>
            <person name="Takahashi M."/>
            <person name="Kanda K."/>
            <person name="Yokoi T."/>
            <person name="Furuya T."/>
            <person name="Kikkawa E."/>
            <person name="Omura Y."/>
            <person name="Abe K."/>
            <person name="Kamihara K."/>
            <person name="Katsuta N."/>
            <person name="Sato K."/>
            <person name="Tanikawa M."/>
            <person name="Yamazaki M."/>
            <person name="Ninomiya K."/>
            <person name="Ishibashi T."/>
            <person name="Yamashita H."/>
            <person name="Murakawa K."/>
            <person name="Fujimori K."/>
            <person name="Tanai H."/>
            <person name="Kimata M."/>
            <person name="Watanabe M."/>
            <person name="Hiraoka S."/>
            <person name="Chiba Y."/>
            <person name="Ishida S."/>
            <person name="Ono Y."/>
            <person name="Takiguchi S."/>
            <person name="Watanabe S."/>
            <person name="Yosida M."/>
            <person name="Hotuta T."/>
            <person name="Kusano J."/>
            <person name="Kanehori K."/>
            <person name="Takahashi-Fujii A."/>
            <person name="Hara H."/>
            <person name="Tanase T.-O."/>
            <person name="Nomura Y."/>
            <person name="Togiya S."/>
            <person name="Komai F."/>
            <person name="Hara R."/>
            <person name="Takeuchi K."/>
            <person name="Arita M."/>
            <person name="Imose N."/>
            <person name="Musashino K."/>
            <person name="Yuuki H."/>
            <person name="Oshima A."/>
            <person name="Sasaki N."/>
            <person name="Aotsuka S."/>
            <person name="Yoshikawa Y."/>
            <person name="Matsunawa H."/>
            <person name="Ichihara T."/>
            <person name="Shiohata N."/>
            <person name="Sano S."/>
            <person name="Moriya S."/>
            <person name="Momiyama H."/>
            <person name="Satoh N."/>
            <person name="Takami S."/>
            <person name="Terashima Y."/>
            <person name="Suzuki O."/>
            <person name="Nakagawa S."/>
            <person name="Senoh A."/>
            <person name="Mizoguchi H."/>
            <person name="Goto Y."/>
            <person name="Shimizu F."/>
            <person name="Wakebe H."/>
            <person name="Hishigaki H."/>
            <person name="Watanabe T."/>
            <person name="Sugiyama A."/>
            <person name="Takemoto M."/>
            <person name="Kawakami B."/>
            <person name="Yamazaki M."/>
            <person name="Watanabe K."/>
            <person name="Kumagai A."/>
            <person name="Itakura S."/>
            <person name="Fukuzumi Y."/>
            <person name="Fujimori Y."/>
            <person name="Komiyama M."/>
            <person name="Tashiro H."/>
            <person name="Tanigami A."/>
            <person name="Fujiwara T."/>
            <person name="Ono T."/>
            <person name="Yamada K."/>
            <person name="Fujii Y."/>
            <person name="Ozaki K."/>
            <person name="Hirao M."/>
            <person name="Ohmori Y."/>
            <person name="Kawabata A."/>
            <person name="Hikiji T."/>
            <person name="Kobatake N."/>
            <person name="Inagaki H."/>
            <person name="Ikema Y."/>
            <person name="Okamoto S."/>
            <person name="Okitani R."/>
            <person name="Kawakami T."/>
            <person name="Noguchi S."/>
            <person name="Itoh T."/>
            <person name="Shigeta K."/>
            <person name="Senba T."/>
            <person name="Matsumura K."/>
            <person name="Nakajima Y."/>
            <person name="Mizuno T."/>
            <person name="Morinaga M."/>
            <person name="Sasaki M."/>
            <person name="Togashi T."/>
            <person name="Oyama M."/>
            <person name="Hata H."/>
            <person name="Watanabe M."/>
            <person name="Komatsu T."/>
            <person name="Mizushima-Sugano J."/>
            <person name="Satoh T."/>
            <person name="Shirai Y."/>
            <person name="Takahashi Y."/>
            <person name="Nakagawa K."/>
            <person name="Okumura K."/>
            <person name="Nagase T."/>
            <person name="Nomura N."/>
            <person name="Kikuchi H."/>
            <person name="Masuho Y."/>
            <person name="Yamashita R."/>
            <person name="Nakai K."/>
            <person name="Yada T."/>
            <person name="Nakamura Y."/>
            <person name="Ohara O."/>
            <person name="Isogai T."/>
            <person name="Sugano S."/>
        </authorList>
    </citation>
    <scope>NUCLEOTIDE SEQUENCE [LARGE SCALE MRNA] (ISOFORM 2)</scope>
</reference>
<reference key="4">
    <citation type="journal article" date="2006" name="Nature">
        <title>The finished DNA sequence of human chromosome 12.</title>
        <authorList>
            <person name="Scherer S.E."/>
            <person name="Muzny D.M."/>
            <person name="Buhay C.J."/>
            <person name="Chen R."/>
            <person name="Cree A."/>
            <person name="Ding Y."/>
            <person name="Dugan-Rocha S."/>
            <person name="Gill R."/>
            <person name="Gunaratne P."/>
            <person name="Harris R.A."/>
            <person name="Hawes A.C."/>
            <person name="Hernandez J."/>
            <person name="Hodgson A.V."/>
            <person name="Hume J."/>
            <person name="Jackson A."/>
            <person name="Khan Z.M."/>
            <person name="Kovar-Smith C."/>
            <person name="Lewis L.R."/>
            <person name="Lozado R.J."/>
            <person name="Metzker M.L."/>
            <person name="Milosavljevic A."/>
            <person name="Miner G.R."/>
            <person name="Montgomery K.T."/>
            <person name="Morgan M.B."/>
            <person name="Nazareth L.V."/>
            <person name="Scott G."/>
            <person name="Sodergren E."/>
            <person name="Song X.-Z."/>
            <person name="Steffen D."/>
            <person name="Lovering R.C."/>
            <person name="Wheeler D.A."/>
            <person name="Worley K.C."/>
            <person name="Yuan Y."/>
            <person name="Zhang Z."/>
            <person name="Adams C.Q."/>
            <person name="Ansari-Lari M.A."/>
            <person name="Ayele M."/>
            <person name="Brown M.J."/>
            <person name="Chen G."/>
            <person name="Chen Z."/>
            <person name="Clerc-Blankenburg K.P."/>
            <person name="Davis C."/>
            <person name="Delgado O."/>
            <person name="Dinh H.H."/>
            <person name="Draper H."/>
            <person name="Gonzalez-Garay M.L."/>
            <person name="Havlak P."/>
            <person name="Jackson L.R."/>
            <person name="Jacob L.S."/>
            <person name="Kelly S.H."/>
            <person name="Li L."/>
            <person name="Li Z."/>
            <person name="Liu J."/>
            <person name="Liu W."/>
            <person name="Lu J."/>
            <person name="Maheshwari M."/>
            <person name="Nguyen B.-V."/>
            <person name="Okwuonu G.O."/>
            <person name="Pasternak S."/>
            <person name="Perez L.M."/>
            <person name="Plopper F.J.H."/>
            <person name="Santibanez J."/>
            <person name="Shen H."/>
            <person name="Tabor P.E."/>
            <person name="Verduzco D."/>
            <person name="Waldron L."/>
            <person name="Wang Q."/>
            <person name="Williams G.A."/>
            <person name="Zhang J."/>
            <person name="Zhou J."/>
            <person name="Allen C.C."/>
            <person name="Amin A.G."/>
            <person name="Anyalebechi V."/>
            <person name="Bailey M."/>
            <person name="Barbaria J.A."/>
            <person name="Bimage K.E."/>
            <person name="Bryant N.P."/>
            <person name="Burch P.E."/>
            <person name="Burkett C.E."/>
            <person name="Burrell K.L."/>
            <person name="Calderon E."/>
            <person name="Cardenas V."/>
            <person name="Carter K."/>
            <person name="Casias K."/>
            <person name="Cavazos I."/>
            <person name="Cavazos S.R."/>
            <person name="Ceasar H."/>
            <person name="Chacko J."/>
            <person name="Chan S.N."/>
            <person name="Chavez D."/>
            <person name="Christopoulos C."/>
            <person name="Chu J."/>
            <person name="Cockrell R."/>
            <person name="Cox C.D."/>
            <person name="Dang M."/>
            <person name="Dathorne S.R."/>
            <person name="David R."/>
            <person name="Davis C.M."/>
            <person name="Davy-Carroll L."/>
            <person name="Deshazo D.R."/>
            <person name="Donlin J.E."/>
            <person name="D'Souza L."/>
            <person name="Eaves K.A."/>
            <person name="Egan A."/>
            <person name="Emery-Cohen A.J."/>
            <person name="Escotto M."/>
            <person name="Flagg N."/>
            <person name="Forbes L.D."/>
            <person name="Gabisi A.M."/>
            <person name="Garza M."/>
            <person name="Hamilton C."/>
            <person name="Henderson N."/>
            <person name="Hernandez O."/>
            <person name="Hines S."/>
            <person name="Hogues M.E."/>
            <person name="Huang M."/>
            <person name="Idlebird D.G."/>
            <person name="Johnson R."/>
            <person name="Jolivet A."/>
            <person name="Jones S."/>
            <person name="Kagan R."/>
            <person name="King L.M."/>
            <person name="Leal B."/>
            <person name="Lebow H."/>
            <person name="Lee S."/>
            <person name="LeVan J.M."/>
            <person name="Lewis L.C."/>
            <person name="London P."/>
            <person name="Lorensuhewa L.M."/>
            <person name="Loulseged H."/>
            <person name="Lovett D.A."/>
            <person name="Lucier A."/>
            <person name="Lucier R.L."/>
            <person name="Ma J."/>
            <person name="Madu R.C."/>
            <person name="Mapua P."/>
            <person name="Martindale A.D."/>
            <person name="Martinez E."/>
            <person name="Massey E."/>
            <person name="Mawhiney S."/>
            <person name="Meador M.G."/>
            <person name="Mendez S."/>
            <person name="Mercado C."/>
            <person name="Mercado I.C."/>
            <person name="Merritt C.E."/>
            <person name="Miner Z.L."/>
            <person name="Minja E."/>
            <person name="Mitchell T."/>
            <person name="Mohabbat F."/>
            <person name="Mohabbat K."/>
            <person name="Montgomery B."/>
            <person name="Moore N."/>
            <person name="Morris S."/>
            <person name="Munidasa M."/>
            <person name="Ngo R.N."/>
            <person name="Nguyen N.B."/>
            <person name="Nickerson E."/>
            <person name="Nwaokelemeh O.O."/>
            <person name="Nwokenkwo S."/>
            <person name="Obregon M."/>
            <person name="Oguh M."/>
            <person name="Oragunye N."/>
            <person name="Oviedo R.J."/>
            <person name="Parish B.J."/>
            <person name="Parker D.N."/>
            <person name="Parrish J."/>
            <person name="Parks K.L."/>
            <person name="Paul H.A."/>
            <person name="Payton B.A."/>
            <person name="Perez A."/>
            <person name="Perrin W."/>
            <person name="Pickens A."/>
            <person name="Primus E.L."/>
            <person name="Pu L.-L."/>
            <person name="Puazo M."/>
            <person name="Quiles M.M."/>
            <person name="Quiroz J.B."/>
            <person name="Rabata D."/>
            <person name="Reeves K."/>
            <person name="Ruiz S.J."/>
            <person name="Shao H."/>
            <person name="Sisson I."/>
            <person name="Sonaike T."/>
            <person name="Sorelle R.P."/>
            <person name="Sutton A.E."/>
            <person name="Svatek A.F."/>
            <person name="Svetz L.A."/>
            <person name="Tamerisa K.S."/>
            <person name="Taylor T.R."/>
            <person name="Teague B."/>
            <person name="Thomas N."/>
            <person name="Thorn R.D."/>
            <person name="Trejos Z.Y."/>
            <person name="Trevino B.K."/>
            <person name="Ukegbu O.N."/>
            <person name="Urban J.B."/>
            <person name="Vasquez L.I."/>
            <person name="Vera V.A."/>
            <person name="Villasana D.M."/>
            <person name="Wang L."/>
            <person name="Ward-Moore S."/>
            <person name="Warren J.T."/>
            <person name="Wei X."/>
            <person name="White F."/>
            <person name="Williamson A.L."/>
            <person name="Wleczyk R."/>
            <person name="Wooden H.S."/>
            <person name="Wooden S.H."/>
            <person name="Yen J."/>
            <person name="Yoon L."/>
            <person name="Yoon V."/>
            <person name="Zorrilla S.E."/>
            <person name="Nelson D."/>
            <person name="Kucherlapati R."/>
            <person name="Weinstock G."/>
            <person name="Gibbs R.A."/>
        </authorList>
    </citation>
    <scope>NUCLEOTIDE SEQUENCE [LARGE SCALE GENOMIC DNA]</scope>
</reference>
<reference key="5">
    <citation type="submission" date="2005-07" db="EMBL/GenBank/DDBJ databases">
        <authorList>
            <person name="Mural R.J."/>
            <person name="Istrail S."/>
            <person name="Sutton G.G."/>
            <person name="Florea L."/>
            <person name="Halpern A.L."/>
            <person name="Mobarry C.M."/>
            <person name="Lippert R."/>
            <person name="Walenz B."/>
            <person name="Shatkay H."/>
            <person name="Dew I."/>
            <person name="Miller J.R."/>
            <person name="Flanigan M.J."/>
            <person name="Edwards N.J."/>
            <person name="Bolanos R."/>
            <person name="Fasulo D."/>
            <person name="Halldorsson B.V."/>
            <person name="Hannenhalli S."/>
            <person name="Turner R."/>
            <person name="Yooseph S."/>
            <person name="Lu F."/>
            <person name="Nusskern D.R."/>
            <person name="Shue B.C."/>
            <person name="Zheng X.H."/>
            <person name="Zhong F."/>
            <person name="Delcher A.L."/>
            <person name="Huson D.H."/>
            <person name="Kravitz S.A."/>
            <person name="Mouchard L."/>
            <person name="Reinert K."/>
            <person name="Remington K.A."/>
            <person name="Clark A.G."/>
            <person name="Waterman M.S."/>
            <person name="Eichler E.E."/>
            <person name="Adams M.D."/>
            <person name="Hunkapiller M.W."/>
            <person name="Myers E.W."/>
            <person name="Venter J.C."/>
        </authorList>
    </citation>
    <scope>NUCLEOTIDE SEQUENCE [LARGE SCALE GENOMIC DNA]</scope>
</reference>
<reference key="6">
    <citation type="journal article" date="2004" name="Genome Res.">
        <title>The status, quality, and expansion of the NIH full-length cDNA project: the Mammalian Gene Collection (MGC).</title>
        <authorList>
            <consortium name="The MGC Project Team"/>
        </authorList>
    </citation>
    <scope>NUCLEOTIDE SEQUENCE [LARGE SCALE MRNA] OF 2-628 (ISOFORM 2)</scope>
    <source>
        <tissue>Testis</tissue>
    </source>
</reference>
<reference key="7">
    <citation type="journal article" date="2001" name="Genome Res.">
        <title>Towards a catalog of human genes and proteins: sequencing and analysis of 500 novel complete protein coding human cDNAs.</title>
        <authorList>
            <person name="Wiemann S."/>
            <person name="Weil B."/>
            <person name="Wellenreuther R."/>
            <person name="Gassenhuber J."/>
            <person name="Glassl S."/>
            <person name="Ansorge W."/>
            <person name="Boecher M."/>
            <person name="Bloecker H."/>
            <person name="Bauersachs S."/>
            <person name="Blum H."/>
            <person name="Lauber J."/>
            <person name="Duesterhoeft A."/>
            <person name="Beyer A."/>
            <person name="Koehrer K."/>
            <person name="Strack N."/>
            <person name="Mewes H.-W."/>
            <person name="Ottenwaelder B."/>
            <person name="Obermaier B."/>
            <person name="Tampe J."/>
            <person name="Heubner D."/>
            <person name="Wambutt R."/>
            <person name="Korn B."/>
            <person name="Klein M."/>
            <person name="Poustka A."/>
        </authorList>
    </citation>
    <scope>NUCLEOTIDE SEQUENCE [LARGE SCALE MRNA] OF 51-628 (ISOFORM 1)</scope>
    <source>
        <tissue>Testis</tissue>
    </source>
</reference>
<organism>
    <name type="scientific">Homo sapiens</name>
    <name type="common">Human</name>
    <dbReference type="NCBI Taxonomy" id="9606"/>
    <lineage>
        <taxon>Eukaryota</taxon>
        <taxon>Metazoa</taxon>
        <taxon>Chordata</taxon>
        <taxon>Craniata</taxon>
        <taxon>Vertebrata</taxon>
        <taxon>Euteleostomi</taxon>
        <taxon>Mammalia</taxon>
        <taxon>Eutheria</taxon>
        <taxon>Euarchontoglires</taxon>
        <taxon>Primates</taxon>
        <taxon>Haplorrhini</taxon>
        <taxon>Catarrhini</taxon>
        <taxon>Hominidae</taxon>
        <taxon>Homo</taxon>
    </lineage>
</organism>
<feature type="chain" id="PRO_0000119903" description="F-box only protein 21">
    <location>
        <begin position="1"/>
        <end position="628"/>
    </location>
</feature>
<feature type="domain" description="F-box">
    <location>
        <begin position="28"/>
        <end position="84"/>
    </location>
</feature>
<feature type="splice variant" id="VSP_035975" description="In isoform 2." evidence="2 3 4 5">
    <location>
        <begin position="442"/>
        <end position="448"/>
    </location>
</feature>
<feature type="sequence variant" id="VAR_047919" description="In dbSNP:rs11556202.">
    <original>N</original>
    <variation>T</variation>
    <location>
        <position position="180"/>
    </location>
</feature>
<proteinExistence type="evidence at protein level"/>
<gene>
    <name type="primary">FBXO21</name>
    <name type="synonym">FBX21</name>
    <name type="synonym">KIAA0875</name>
</gene>
<evidence type="ECO:0000250" key="1"/>
<evidence type="ECO:0000303" key="2">
    <source>
    </source>
</evidence>
<evidence type="ECO:0000303" key="3">
    <source>
    </source>
</evidence>
<evidence type="ECO:0000303" key="4">
    <source>
    </source>
</evidence>
<evidence type="ECO:0000303" key="5">
    <source>
    </source>
</evidence>
<evidence type="ECO:0000305" key="6"/>
<accession>O94952</accession>
<accession>B3KMF0</accession>
<accession>Q5BJG0</accession>
<accession>Q9H087</accession>